<feature type="chain" id="PRO_0000322027" description="Small ribosomal subunit protein uS8c">
    <location>
        <begin position="1"/>
        <end position="134"/>
    </location>
</feature>
<evidence type="ECO:0000250" key="1"/>
<evidence type="ECO:0000305" key="2"/>
<geneLocation type="plastid"/>
<name>RR8_CUSGR</name>
<proteinExistence type="inferred from homology"/>
<sequence>MGRDTIAEVLTVIRNANMDGKKMVKIPSSNITENIIKLLLREGFLENVRKHYENGNYFLVLTLRHQKTKKGPVTNILNLKQISRPGRRIYSMSKKIPRILGGIGIVILSTSHGILTDREARLEGIGGEILCYIW</sequence>
<accession>A7M931</accession>
<keyword id="KW-0934">Plastid</keyword>
<keyword id="KW-0687">Ribonucleoprotein</keyword>
<keyword id="KW-0689">Ribosomal protein</keyword>
<keyword id="KW-0694">RNA-binding</keyword>
<keyword id="KW-0699">rRNA-binding</keyword>
<dbReference type="EMBL" id="AM711639">
    <property type="protein sequence ID" value="CAM98359.1"/>
    <property type="molecule type" value="Genomic_DNA"/>
</dbReference>
<dbReference type="RefSeq" id="YP_001430072.1">
    <property type="nucleotide sequence ID" value="NC_009765.1"/>
</dbReference>
<dbReference type="SMR" id="A7M931"/>
<dbReference type="GeneID" id="5536759"/>
<dbReference type="GO" id="GO:0009536">
    <property type="term" value="C:plastid"/>
    <property type="evidence" value="ECO:0007669"/>
    <property type="project" value="UniProtKB-SubCell"/>
</dbReference>
<dbReference type="GO" id="GO:1990904">
    <property type="term" value="C:ribonucleoprotein complex"/>
    <property type="evidence" value="ECO:0007669"/>
    <property type="project" value="UniProtKB-KW"/>
</dbReference>
<dbReference type="GO" id="GO:0005840">
    <property type="term" value="C:ribosome"/>
    <property type="evidence" value="ECO:0007669"/>
    <property type="project" value="UniProtKB-KW"/>
</dbReference>
<dbReference type="GO" id="GO:0019843">
    <property type="term" value="F:rRNA binding"/>
    <property type="evidence" value="ECO:0007669"/>
    <property type="project" value="UniProtKB-KW"/>
</dbReference>
<dbReference type="GO" id="GO:0003735">
    <property type="term" value="F:structural constituent of ribosome"/>
    <property type="evidence" value="ECO:0007669"/>
    <property type="project" value="InterPro"/>
</dbReference>
<dbReference type="GO" id="GO:0006412">
    <property type="term" value="P:translation"/>
    <property type="evidence" value="ECO:0007669"/>
    <property type="project" value="InterPro"/>
</dbReference>
<dbReference type="FunFam" id="3.30.1490.10:FF:000001">
    <property type="entry name" value="30S ribosomal protein S8"/>
    <property type="match status" value="1"/>
</dbReference>
<dbReference type="Gene3D" id="3.30.1370.30">
    <property type="match status" value="1"/>
</dbReference>
<dbReference type="Gene3D" id="3.30.1490.10">
    <property type="match status" value="1"/>
</dbReference>
<dbReference type="HAMAP" id="MF_01302_B">
    <property type="entry name" value="Ribosomal_uS8_B"/>
    <property type="match status" value="1"/>
</dbReference>
<dbReference type="InterPro" id="IPR000630">
    <property type="entry name" value="Ribosomal_uS8"/>
</dbReference>
<dbReference type="InterPro" id="IPR047863">
    <property type="entry name" value="Ribosomal_uS8_CS"/>
</dbReference>
<dbReference type="InterPro" id="IPR035987">
    <property type="entry name" value="Ribosomal_uS8_sf"/>
</dbReference>
<dbReference type="NCBIfam" id="NF001109">
    <property type="entry name" value="PRK00136.1"/>
    <property type="match status" value="1"/>
</dbReference>
<dbReference type="PANTHER" id="PTHR11758">
    <property type="entry name" value="40S RIBOSOMAL PROTEIN S15A"/>
    <property type="match status" value="1"/>
</dbReference>
<dbReference type="Pfam" id="PF00410">
    <property type="entry name" value="Ribosomal_S8"/>
    <property type="match status" value="1"/>
</dbReference>
<dbReference type="SUPFAM" id="SSF56047">
    <property type="entry name" value="Ribosomal protein S8"/>
    <property type="match status" value="1"/>
</dbReference>
<dbReference type="PROSITE" id="PS00053">
    <property type="entry name" value="RIBOSOMAL_S8"/>
    <property type="match status" value="1"/>
</dbReference>
<organism>
    <name type="scientific">Cuscuta gronovii</name>
    <name type="common">Common dodder</name>
    <name type="synonym">Epithymum gronovii</name>
    <dbReference type="NCBI Taxonomy" id="35886"/>
    <lineage>
        <taxon>Eukaryota</taxon>
        <taxon>Viridiplantae</taxon>
        <taxon>Streptophyta</taxon>
        <taxon>Embryophyta</taxon>
        <taxon>Tracheophyta</taxon>
        <taxon>Spermatophyta</taxon>
        <taxon>Magnoliopsida</taxon>
        <taxon>eudicotyledons</taxon>
        <taxon>Gunneridae</taxon>
        <taxon>Pentapetalae</taxon>
        <taxon>asterids</taxon>
        <taxon>lamiids</taxon>
        <taxon>Solanales</taxon>
        <taxon>Convolvulaceae</taxon>
        <taxon>Cuscuteae</taxon>
        <taxon>Cuscuta</taxon>
        <taxon>Cuscuta subgen. Grammica</taxon>
        <taxon>Cuscuta sect. Oxycarpae</taxon>
    </lineage>
</organism>
<reference key="1">
    <citation type="journal article" date="2007" name="BMC Plant Biol.">
        <title>Complete DNA sequences of the plastid genomes of two parasitic flowering plant species, Cuscuta reflexa and Cuscuta gronovii.</title>
        <authorList>
            <person name="Funk H.T."/>
            <person name="Berg S."/>
            <person name="Krupinska K."/>
            <person name="Maier U.-G."/>
            <person name="Krause K."/>
        </authorList>
    </citation>
    <scope>NUCLEOTIDE SEQUENCE [LARGE SCALE GENOMIC DNA]</scope>
</reference>
<protein>
    <recommendedName>
        <fullName evidence="2">Small ribosomal subunit protein uS8c</fullName>
    </recommendedName>
    <alternativeName>
        <fullName>30S ribosomal protein S8, plastid</fullName>
    </alternativeName>
</protein>
<gene>
    <name type="primary">rps8</name>
</gene>
<comment type="function">
    <text evidence="1">One of the primary rRNA binding proteins, it binds directly to 16S rRNA central domain where it helps coordinate assembly of the platform of the 30S subunit.</text>
</comment>
<comment type="subunit">
    <text evidence="1">Part of the 30S ribosomal subunit.</text>
</comment>
<comment type="subcellular location">
    <subcellularLocation>
        <location>Plastid</location>
    </subcellularLocation>
</comment>
<comment type="similarity">
    <text evidence="2">Belongs to the universal ribosomal protein uS8 family.</text>
</comment>